<reference key="1">
    <citation type="submission" date="2007-04" db="EMBL/GenBank/DDBJ databases">
        <title>Complete sequence of chromosome of Mycobacterium gilvum PYR-GCK.</title>
        <authorList>
            <consortium name="US DOE Joint Genome Institute"/>
            <person name="Copeland A."/>
            <person name="Lucas S."/>
            <person name="Lapidus A."/>
            <person name="Barry K."/>
            <person name="Detter J.C."/>
            <person name="Glavina del Rio T."/>
            <person name="Hammon N."/>
            <person name="Israni S."/>
            <person name="Dalin E."/>
            <person name="Tice H."/>
            <person name="Pitluck S."/>
            <person name="Chain P."/>
            <person name="Malfatti S."/>
            <person name="Shin M."/>
            <person name="Vergez L."/>
            <person name="Schmutz J."/>
            <person name="Larimer F."/>
            <person name="Land M."/>
            <person name="Hauser L."/>
            <person name="Kyrpides N."/>
            <person name="Mikhailova N."/>
            <person name="Miller C."/>
            <person name="Richardson P."/>
        </authorList>
    </citation>
    <scope>NUCLEOTIDE SEQUENCE [LARGE SCALE GENOMIC DNA]</scope>
    <source>
        <strain>PYR-GCK</strain>
    </source>
</reference>
<sequence>MSLTTPDKAQVLADALPWLTALNGKIVVVKYGGNAMTDDRLKAAFAADMVFLRNCGIHPVVVHGGGPQISAMLKKLGIAGDFKGGFRVTTPEVLEVARMVLFGQVGRELVNLINAYGPYAVGITGEDAHLFTAVRRTVMVDGVATDIGLVGDVERVNTDAVLDLIDAGRIPVVSTIAPDTAGLVYNINADTAAAALAEALGAEKLLMLTDVEGLYTDWPDRGSLVNQINSDALAELLPTLEEGMVPKIEACLRAIDGGVPSAHVIDGRVEHCVLVELFTNEGAGTKVVRS</sequence>
<dbReference type="EC" id="2.7.2.8" evidence="1"/>
<dbReference type="EMBL" id="CP000656">
    <property type="protein sequence ID" value="ABP46002.1"/>
    <property type="molecule type" value="Genomic_DNA"/>
</dbReference>
<dbReference type="SMR" id="A4T9V7"/>
<dbReference type="STRING" id="350054.Mflv_3528"/>
<dbReference type="KEGG" id="mgi:Mflv_3528"/>
<dbReference type="eggNOG" id="COG0548">
    <property type="taxonomic scope" value="Bacteria"/>
</dbReference>
<dbReference type="HOGENOM" id="CLU_053680_0_1_11"/>
<dbReference type="OrthoDB" id="9803155at2"/>
<dbReference type="UniPathway" id="UPA00068">
    <property type="reaction ID" value="UER00107"/>
</dbReference>
<dbReference type="GO" id="GO:0005737">
    <property type="term" value="C:cytoplasm"/>
    <property type="evidence" value="ECO:0007669"/>
    <property type="project" value="UniProtKB-SubCell"/>
</dbReference>
<dbReference type="GO" id="GO:0003991">
    <property type="term" value="F:acetylglutamate kinase activity"/>
    <property type="evidence" value="ECO:0007669"/>
    <property type="project" value="UniProtKB-UniRule"/>
</dbReference>
<dbReference type="GO" id="GO:0005524">
    <property type="term" value="F:ATP binding"/>
    <property type="evidence" value="ECO:0007669"/>
    <property type="project" value="UniProtKB-UniRule"/>
</dbReference>
<dbReference type="GO" id="GO:0042450">
    <property type="term" value="P:arginine biosynthetic process via ornithine"/>
    <property type="evidence" value="ECO:0007669"/>
    <property type="project" value="UniProtKB-UniRule"/>
</dbReference>
<dbReference type="GO" id="GO:0006526">
    <property type="term" value="P:L-arginine biosynthetic process"/>
    <property type="evidence" value="ECO:0007669"/>
    <property type="project" value="UniProtKB-UniPathway"/>
</dbReference>
<dbReference type="CDD" id="cd04250">
    <property type="entry name" value="AAK_NAGK-C"/>
    <property type="match status" value="1"/>
</dbReference>
<dbReference type="FunFam" id="3.40.1160.10:FF:000004">
    <property type="entry name" value="Acetylglutamate kinase"/>
    <property type="match status" value="1"/>
</dbReference>
<dbReference type="Gene3D" id="3.40.1160.10">
    <property type="entry name" value="Acetylglutamate kinase-like"/>
    <property type="match status" value="1"/>
</dbReference>
<dbReference type="HAMAP" id="MF_00082">
    <property type="entry name" value="ArgB"/>
    <property type="match status" value="1"/>
</dbReference>
<dbReference type="InterPro" id="IPR036393">
    <property type="entry name" value="AceGlu_kinase-like_sf"/>
</dbReference>
<dbReference type="InterPro" id="IPR004662">
    <property type="entry name" value="AcgluKinase_fam"/>
</dbReference>
<dbReference type="InterPro" id="IPR037528">
    <property type="entry name" value="ArgB"/>
</dbReference>
<dbReference type="InterPro" id="IPR001048">
    <property type="entry name" value="Asp/Glu/Uridylate_kinase"/>
</dbReference>
<dbReference type="InterPro" id="IPR001057">
    <property type="entry name" value="Glu/AcGlu_kinase"/>
</dbReference>
<dbReference type="InterPro" id="IPR041727">
    <property type="entry name" value="NAGK-C"/>
</dbReference>
<dbReference type="NCBIfam" id="TIGR00761">
    <property type="entry name" value="argB"/>
    <property type="match status" value="1"/>
</dbReference>
<dbReference type="PANTHER" id="PTHR23342">
    <property type="entry name" value="N-ACETYLGLUTAMATE SYNTHASE"/>
    <property type="match status" value="1"/>
</dbReference>
<dbReference type="PANTHER" id="PTHR23342:SF0">
    <property type="entry name" value="N-ACETYLGLUTAMATE SYNTHASE, MITOCHONDRIAL"/>
    <property type="match status" value="1"/>
</dbReference>
<dbReference type="Pfam" id="PF00696">
    <property type="entry name" value="AA_kinase"/>
    <property type="match status" value="1"/>
</dbReference>
<dbReference type="PIRSF" id="PIRSF000728">
    <property type="entry name" value="NAGK"/>
    <property type="match status" value="1"/>
</dbReference>
<dbReference type="PRINTS" id="PR00474">
    <property type="entry name" value="GLU5KINASE"/>
</dbReference>
<dbReference type="SUPFAM" id="SSF53633">
    <property type="entry name" value="Carbamate kinase-like"/>
    <property type="match status" value="1"/>
</dbReference>
<protein>
    <recommendedName>
        <fullName evidence="1">Acetylglutamate kinase</fullName>
        <ecNumber evidence="1">2.7.2.8</ecNumber>
    </recommendedName>
    <alternativeName>
        <fullName evidence="1">N-acetyl-L-glutamate 5-phosphotransferase</fullName>
    </alternativeName>
    <alternativeName>
        <fullName evidence="1">NAG kinase</fullName>
        <shortName evidence="1">NAGK</shortName>
    </alternativeName>
</protein>
<proteinExistence type="inferred from homology"/>
<evidence type="ECO:0000255" key="1">
    <source>
        <dbReference type="HAMAP-Rule" id="MF_00082"/>
    </source>
</evidence>
<comment type="function">
    <text evidence="1">Catalyzes the ATP-dependent phosphorylation of N-acetyl-L-glutamate.</text>
</comment>
<comment type="catalytic activity">
    <reaction evidence="1">
        <text>N-acetyl-L-glutamate + ATP = N-acetyl-L-glutamyl 5-phosphate + ADP</text>
        <dbReference type="Rhea" id="RHEA:14629"/>
        <dbReference type="ChEBI" id="CHEBI:30616"/>
        <dbReference type="ChEBI" id="CHEBI:44337"/>
        <dbReference type="ChEBI" id="CHEBI:57936"/>
        <dbReference type="ChEBI" id="CHEBI:456216"/>
        <dbReference type="EC" id="2.7.2.8"/>
    </reaction>
</comment>
<comment type="pathway">
    <text evidence="1">Amino-acid biosynthesis; L-arginine biosynthesis; N(2)-acetyl-L-ornithine from L-glutamate: step 2/4.</text>
</comment>
<comment type="subcellular location">
    <subcellularLocation>
        <location evidence="1">Cytoplasm</location>
    </subcellularLocation>
</comment>
<comment type="similarity">
    <text evidence="1">Belongs to the acetylglutamate kinase family. ArgB subfamily.</text>
</comment>
<organism>
    <name type="scientific">Mycolicibacterium gilvum (strain PYR-GCK)</name>
    <name type="common">Mycobacterium gilvum (strain PYR-GCK)</name>
    <dbReference type="NCBI Taxonomy" id="350054"/>
    <lineage>
        <taxon>Bacteria</taxon>
        <taxon>Bacillati</taxon>
        <taxon>Actinomycetota</taxon>
        <taxon>Actinomycetes</taxon>
        <taxon>Mycobacteriales</taxon>
        <taxon>Mycobacteriaceae</taxon>
        <taxon>Mycolicibacterium</taxon>
    </lineage>
</organism>
<feature type="chain" id="PRO_1000075314" description="Acetylglutamate kinase">
    <location>
        <begin position="1"/>
        <end position="290"/>
    </location>
</feature>
<feature type="binding site" evidence="1">
    <location>
        <begin position="65"/>
        <end position="66"/>
    </location>
    <ligand>
        <name>substrate</name>
    </ligand>
</feature>
<feature type="binding site" evidence="1">
    <location>
        <position position="87"/>
    </location>
    <ligand>
        <name>substrate</name>
    </ligand>
</feature>
<feature type="binding site" evidence="1">
    <location>
        <position position="186"/>
    </location>
    <ligand>
        <name>substrate</name>
    </ligand>
</feature>
<feature type="site" description="Transition state stabilizer" evidence="1">
    <location>
        <position position="30"/>
    </location>
</feature>
<feature type="site" description="Transition state stabilizer" evidence="1">
    <location>
        <position position="247"/>
    </location>
</feature>
<keyword id="KW-0028">Amino-acid biosynthesis</keyword>
<keyword id="KW-0055">Arginine biosynthesis</keyword>
<keyword id="KW-0067">ATP-binding</keyword>
<keyword id="KW-0963">Cytoplasm</keyword>
<keyword id="KW-0418">Kinase</keyword>
<keyword id="KW-0547">Nucleotide-binding</keyword>
<keyword id="KW-0808">Transferase</keyword>
<gene>
    <name evidence="1" type="primary">argB</name>
    <name type="ordered locus">Mflv_3528</name>
</gene>
<name>ARGB_MYCGI</name>
<accession>A4T9V7</accession>